<reference evidence="5" key="1">
    <citation type="journal article" date="2012" name="PLoS ONE">
        <title>Peptidomics of the agriculturally damaging larval stage of the cabbage root fly Delia radicum (Diptera: Anthomyiidae).</title>
        <authorList>
            <person name="Zoephel J."/>
            <person name="Reiher W."/>
            <person name="Rexer K.-H."/>
            <person name="Kahnt J."/>
            <person name="Wegener C."/>
        </authorList>
    </citation>
    <scope>PROTEIN SEQUENCE</scope>
    <scope>TISSUE SPECIFICITY</scope>
    <scope>DEVELOPMENTAL STAGE</scope>
    <scope>MASS SPECTROMETRY</scope>
    <scope>AMIDATION AT VAL-14</scope>
    <source>
        <tissue evidence="3">CNS</tissue>
    </source>
</reference>
<organism>
    <name type="scientific">Delia radicum</name>
    <name type="common">Cabbage root fly</name>
    <name type="synonym">Anthomyia brassicae</name>
    <dbReference type="NCBI Taxonomy" id="30064"/>
    <lineage>
        <taxon>Eukaryota</taxon>
        <taxon>Metazoa</taxon>
        <taxon>Ecdysozoa</taxon>
        <taxon>Arthropoda</taxon>
        <taxon>Hexapoda</taxon>
        <taxon>Insecta</taxon>
        <taxon>Pterygota</taxon>
        <taxon>Neoptera</taxon>
        <taxon>Endopterygota</taxon>
        <taxon>Diptera</taxon>
        <taxon>Brachycera</taxon>
        <taxon>Muscomorpha</taxon>
        <taxon>Muscoidea</taxon>
        <taxon>Anthomyiidae</taxon>
        <taxon>Anthomyiinae</taxon>
        <taxon>Delia</taxon>
    </lineage>
</organism>
<evidence type="ECO:0000250" key="1">
    <source>
        <dbReference type="UniProtKB" id="P84352"/>
    </source>
</evidence>
<evidence type="ECO:0000255" key="2"/>
<evidence type="ECO:0000269" key="3">
    <source>
    </source>
</evidence>
<evidence type="ECO:0000303" key="4">
    <source>
    </source>
</evidence>
<evidence type="ECO:0000305" key="5"/>
<comment type="subcellular location">
    <subcellularLocation>
        <location evidence="1">Secreted</location>
    </subcellularLocation>
</comment>
<comment type="tissue specificity">
    <text evidence="3">Expressed in the CNS and abdominal perisympathetic organs (aPSO). Not expressed in the ring gland, midgut or thoracic perisympathetic organs (tPSO) (at protein level).</text>
</comment>
<comment type="developmental stage">
    <text evidence="3">Detected in larvae.</text>
</comment>
<comment type="mass spectrometry" mass="1321.72" method="MALDI" evidence="3"/>
<comment type="similarity">
    <text evidence="2">Belongs to the periviscerokinin family.</text>
</comment>
<proteinExistence type="evidence at protein level"/>
<keyword id="KW-0027">Amidation</keyword>
<keyword id="KW-0903">Direct protein sequencing</keyword>
<keyword id="KW-0527">Neuropeptide</keyword>
<keyword id="KW-0964">Secreted</keyword>
<accession>B3EWL3</accession>
<sequence length="14" mass="1322">GGGGTSGLFAFPRV</sequence>
<protein>
    <recommendedName>
        <fullName evidence="4">CAPA-Periviscerokinin-1</fullName>
        <shortName evidence="4">CAPA-PVK-1</shortName>
    </recommendedName>
</protein>
<name>PVK1_DELRA</name>
<dbReference type="GO" id="GO:0005576">
    <property type="term" value="C:extracellular region"/>
    <property type="evidence" value="ECO:0007669"/>
    <property type="project" value="UniProtKB-SubCell"/>
</dbReference>
<dbReference type="GO" id="GO:0007218">
    <property type="term" value="P:neuropeptide signaling pathway"/>
    <property type="evidence" value="ECO:0007669"/>
    <property type="project" value="UniProtKB-KW"/>
</dbReference>
<dbReference type="InterPro" id="IPR013231">
    <property type="entry name" value="Periviscerokinin"/>
</dbReference>
<dbReference type="Pfam" id="PF08259">
    <property type="entry name" value="Periviscerokin"/>
    <property type="match status" value="1"/>
</dbReference>
<feature type="peptide" id="PRO_0000419733" description="CAPA-Periviscerokinin-1" evidence="3">
    <location>
        <begin position="1"/>
        <end position="14"/>
    </location>
</feature>
<feature type="modified residue" description="Valine amide" evidence="3">
    <location>
        <position position="14"/>
    </location>
</feature>
<feature type="unsure residue" description="L or I" evidence="3">
    <location>
        <position position="8"/>
    </location>
</feature>